<reference key="1">
    <citation type="journal article" date="2004" name="Science">
        <title>The 1.2-megabase genome sequence of Mimivirus.</title>
        <authorList>
            <person name="Raoult D."/>
            <person name="Audic S."/>
            <person name="Robert C."/>
            <person name="Abergel C."/>
            <person name="Renesto P."/>
            <person name="Ogata H."/>
            <person name="La Scola B."/>
            <person name="Susan M."/>
            <person name="Claverie J.-M."/>
        </authorList>
    </citation>
    <scope>NUCLEOTIDE SEQUENCE [LARGE SCALE GENOMIC DNA]</scope>
    <source>
        <strain>Rowbotham-Bradford</strain>
    </source>
</reference>
<feature type="chain" id="PRO_0000309333" description="Uncharacterized phosphoglycerate mutase family protein R708">
    <location>
        <begin position="1"/>
        <end position="204"/>
    </location>
</feature>
<feature type="active site" description="Tele-phosphohistidine intermediate" evidence="1">
    <location>
        <position position="9"/>
    </location>
</feature>
<feature type="active site" description="Proton donor/acceptor" evidence="1">
    <location>
        <position position="86"/>
    </location>
</feature>
<feature type="site" description="Transition state stabilizer" evidence="1">
    <location>
        <position position="151"/>
    </location>
</feature>
<keyword id="KW-1185">Reference proteome</keyword>
<dbReference type="EMBL" id="AY653733">
    <property type="protein sequence ID" value="AAV50968.1"/>
    <property type="molecule type" value="Genomic_DNA"/>
</dbReference>
<dbReference type="SMR" id="Q5UQ52"/>
<dbReference type="KEGG" id="vg:9925361"/>
<dbReference type="OrthoDB" id="13395at10239"/>
<dbReference type="Proteomes" id="UP000001134">
    <property type="component" value="Genome"/>
</dbReference>
<dbReference type="CDD" id="cd07067">
    <property type="entry name" value="HP_PGM_like"/>
    <property type="match status" value="1"/>
</dbReference>
<dbReference type="Gene3D" id="3.40.50.1240">
    <property type="entry name" value="Phosphoglycerate mutase-like"/>
    <property type="match status" value="1"/>
</dbReference>
<dbReference type="InterPro" id="IPR013078">
    <property type="entry name" value="His_Pase_superF_clade-1"/>
</dbReference>
<dbReference type="InterPro" id="IPR029033">
    <property type="entry name" value="His_PPase_superfam"/>
</dbReference>
<dbReference type="InterPro" id="IPR051710">
    <property type="entry name" value="Phosphatase_SH3-domain"/>
</dbReference>
<dbReference type="PANTHER" id="PTHR16469">
    <property type="entry name" value="UBIQUITIN-ASSOCIATED AND SH3 DOMAIN-CONTAINING BA-RELATED"/>
    <property type="match status" value="1"/>
</dbReference>
<dbReference type="PANTHER" id="PTHR16469:SF27">
    <property type="entry name" value="UBIQUITIN-ASSOCIATED AND SH3 DOMAIN-CONTAINING BA-RELATED"/>
    <property type="match status" value="1"/>
</dbReference>
<dbReference type="Pfam" id="PF00300">
    <property type="entry name" value="His_Phos_1"/>
    <property type="match status" value="1"/>
</dbReference>
<dbReference type="SUPFAM" id="SSF53254">
    <property type="entry name" value="Phosphoglycerate mutase-like"/>
    <property type="match status" value="1"/>
</dbReference>
<sequence length="204" mass="24090">MVRVKIIRHSERLDYTNPLYWLICFGHYWADSPLTKHGYEIAKKKGKELAESGFNPKYIYTSPYSRTMATATEIKTVFPNSHLVIEYLLAEYQPYFKHKINLYPDGIPTEFNGQETEFNYPETKSKFRERVEFIITKLIENNDEDIVIVTHGELLKVYIDYIQSIYPDLLLDSKVTPYLTTLSFEFDKKRDMIIEESVNIDFSN</sequence>
<proteinExistence type="inferred from homology"/>
<evidence type="ECO:0000250" key="1">
    <source>
        <dbReference type="UniProtKB" id="P62707"/>
    </source>
</evidence>
<evidence type="ECO:0000305" key="2"/>
<gene>
    <name type="ordered locus">MIMI_R708</name>
</gene>
<protein>
    <recommendedName>
        <fullName>Uncharacterized phosphoglycerate mutase family protein R708</fullName>
    </recommendedName>
</protein>
<organismHost>
    <name type="scientific">Acanthamoeba polyphaga</name>
    <name type="common">Amoeba</name>
    <dbReference type="NCBI Taxonomy" id="5757"/>
</organismHost>
<name>YR708_MIMIV</name>
<organism>
    <name type="scientific">Acanthamoeba polyphaga mimivirus</name>
    <name type="common">APMV</name>
    <dbReference type="NCBI Taxonomy" id="212035"/>
    <lineage>
        <taxon>Viruses</taxon>
        <taxon>Varidnaviria</taxon>
        <taxon>Bamfordvirae</taxon>
        <taxon>Nucleocytoviricota</taxon>
        <taxon>Megaviricetes</taxon>
        <taxon>Imitervirales</taxon>
        <taxon>Mimiviridae</taxon>
        <taxon>Megamimivirinae</taxon>
        <taxon>Mimivirus</taxon>
        <taxon>Mimivirus bradfordmassiliense</taxon>
    </lineage>
</organism>
<comment type="similarity">
    <text evidence="2">Belongs to the phosphoglycerate mutase family.</text>
</comment>
<accession>Q5UQ52</accession>